<sequence length="181" mass="20284">MASSMLSSAAVVTSPAQATMVAPFTGLKSSAAFPVTRKTNKDITSIASNGGRVSCMKVWPPIGKKKFETLSYLPDLSDVELAKEVDYLLRNKWIPCVEFELEHGFVYREHGNTPGYYDGRYWTMWKLPLFGCTDSAQVLKEVEECKKEYPGAFIRIIGFDNTRQVQCISFIAYKPPSFTEA</sequence>
<dbReference type="EMBL" id="X14564">
    <property type="protein sequence ID" value="CAA32702.1"/>
    <property type="molecule type" value="Genomic_DNA"/>
</dbReference>
<dbReference type="EMBL" id="AB005248">
    <property type="protein sequence ID" value="BAB09353.1"/>
    <property type="molecule type" value="Genomic_DNA"/>
</dbReference>
<dbReference type="EMBL" id="CP002688">
    <property type="protein sequence ID" value="AED94311.1"/>
    <property type="molecule type" value="Genomic_DNA"/>
</dbReference>
<dbReference type="EMBL" id="AF360124">
    <property type="protein sequence ID" value="AAK25834.1"/>
    <property type="molecule type" value="mRNA"/>
</dbReference>
<dbReference type="EMBL" id="AY054552">
    <property type="protein sequence ID" value="AAK96743.1"/>
    <property type="molecule type" value="mRNA"/>
</dbReference>
<dbReference type="EMBL" id="AY051025">
    <property type="protein sequence ID" value="AAK93702.1"/>
    <property type="molecule type" value="mRNA"/>
</dbReference>
<dbReference type="EMBL" id="AF410314">
    <property type="protein sequence ID" value="AAK95300.1"/>
    <property type="molecule type" value="mRNA"/>
</dbReference>
<dbReference type="EMBL" id="AF462822">
    <property type="protein sequence ID" value="AAL58912.1"/>
    <property type="molecule type" value="mRNA"/>
</dbReference>
<dbReference type="EMBL" id="AY064686">
    <property type="protein sequence ID" value="AAL47390.1"/>
    <property type="molecule type" value="mRNA"/>
</dbReference>
<dbReference type="EMBL" id="AY098970">
    <property type="protein sequence ID" value="AAM19980.1"/>
    <property type="molecule type" value="mRNA"/>
</dbReference>
<dbReference type="EMBL" id="BT000721">
    <property type="protein sequence ID" value="AAN31863.1"/>
    <property type="molecule type" value="mRNA"/>
</dbReference>
<dbReference type="PIR" id="S03719">
    <property type="entry name" value="RKMUB3"/>
</dbReference>
<dbReference type="RefSeq" id="NP_198657.1">
    <molecule id="P10798-1"/>
    <property type="nucleotide sequence ID" value="NM_123202.4"/>
</dbReference>
<dbReference type="SMR" id="P10798"/>
<dbReference type="BioGRID" id="19079">
    <property type="interactions" value="12"/>
</dbReference>
<dbReference type="FunCoup" id="P10798">
    <property type="interactions" value="1105"/>
</dbReference>
<dbReference type="IntAct" id="P10798">
    <property type="interactions" value="6"/>
</dbReference>
<dbReference type="STRING" id="3702.P10798"/>
<dbReference type="iPTMnet" id="P10798"/>
<dbReference type="PaxDb" id="3702-AT5G38410.3"/>
<dbReference type="EnsemblPlants" id="AT5G38410.1">
    <molecule id="P10798-1"/>
    <property type="protein sequence ID" value="AT5G38410.1"/>
    <property type="gene ID" value="AT5G38410"/>
</dbReference>
<dbReference type="GeneID" id="833828"/>
<dbReference type="Gramene" id="AT5G38410.1">
    <molecule id="P10798-1"/>
    <property type="protein sequence ID" value="AT5G38410.1"/>
    <property type="gene ID" value="AT5G38410"/>
</dbReference>
<dbReference type="KEGG" id="ath:AT5G38410"/>
<dbReference type="Araport" id="AT5G38410"/>
<dbReference type="TAIR" id="AT5G38410">
    <property type="gene designation" value="RBCS3B"/>
</dbReference>
<dbReference type="eggNOG" id="ENOG502QT0M">
    <property type="taxonomic scope" value="Eukaryota"/>
</dbReference>
<dbReference type="InParanoid" id="P10798"/>
<dbReference type="OrthoDB" id="1046033at2759"/>
<dbReference type="PhylomeDB" id="P10798"/>
<dbReference type="BioCyc" id="MetaCyc:AT5G38410-MONOMER"/>
<dbReference type="CD-CODE" id="4299E36E">
    <property type="entry name" value="Nucleolus"/>
</dbReference>
<dbReference type="PRO" id="PR:P10798"/>
<dbReference type="Proteomes" id="UP000006548">
    <property type="component" value="Chromosome 5"/>
</dbReference>
<dbReference type="ExpressionAtlas" id="P10798">
    <property type="expression patterns" value="baseline and differential"/>
</dbReference>
<dbReference type="GO" id="GO:0009507">
    <property type="term" value="C:chloroplast"/>
    <property type="evidence" value="ECO:0007669"/>
    <property type="project" value="UniProtKB-SubCell"/>
</dbReference>
<dbReference type="GO" id="GO:0019904">
    <property type="term" value="F:protein domain specific binding"/>
    <property type="evidence" value="ECO:0000353"/>
    <property type="project" value="CAFA"/>
</dbReference>
<dbReference type="GO" id="GO:0016984">
    <property type="term" value="F:ribulose-bisphosphate carboxylase activity"/>
    <property type="evidence" value="ECO:0007669"/>
    <property type="project" value="UniProtKB-UniRule"/>
</dbReference>
<dbReference type="GO" id="GO:0009853">
    <property type="term" value="P:photorespiration"/>
    <property type="evidence" value="ECO:0007669"/>
    <property type="project" value="UniProtKB-KW"/>
</dbReference>
<dbReference type="GO" id="GO:0019253">
    <property type="term" value="P:reductive pentose-phosphate cycle"/>
    <property type="evidence" value="ECO:0007669"/>
    <property type="project" value="UniProtKB-UniRule"/>
</dbReference>
<dbReference type="CDD" id="cd03527">
    <property type="entry name" value="RuBisCO_small"/>
    <property type="match status" value="1"/>
</dbReference>
<dbReference type="FunFam" id="3.30.190.10:FF:000001">
    <property type="entry name" value="Ribulose bisphosphate carboxylase small chain, chloroplastic"/>
    <property type="match status" value="1"/>
</dbReference>
<dbReference type="Gene3D" id="3.30.190.10">
    <property type="entry name" value="Ribulose bisphosphate carboxylase, small subunit"/>
    <property type="match status" value="1"/>
</dbReference>
<dbReference type="HAMAP" id="MF_00859">
    <property type="entry name" value="RuBisCO_S_bact"/>
    <property type="match status" value="1"/>
</dbReference>
<dbReference type="InterPro" id="IPR024681">
    <property type="entry name" value="RuBisCO_ssu"/>
</dbReference>
<dbReference type="InterPro" id="IPR000894">
    <property type="entry name" value="RuBisCO_ssu_dom"/>
</dbReference>
<dbReference type="InterPro" id="IPR024680">
    <property type="entry name" value="RuBisCO_ssu_N"/>
</dbReference>
<dbReference type="InterPro" id="IPR036385">
    <property type="entry name" value="RuBisCO_ssu_sf"/>
</dbReference>
<dbReference type="PANTHER" id="PTHR31262">
    <property type="entry name" value="RIBULOSE BISPHOSPHATE CARBOXYLASE SMALL CHAIN 1, CHLOROPLASTIC"/>
    <property type="match status" value="1"/>
</dbReference>
<dbReference type="PANTHER" id="PTHR31262:SF10">
    <property type="entry name" value="RIBULOSE BISPHOSPHATE CARBOXYLASE SMALL SUBUNIT 1A, CHLOROPLASTIC-RELATED"/>
    <property type="match status" value="1"/>
</dbReference>
<dbReference type="Pfam" id="PF12338">
    <property type="entry name" value="RbcS"/>
    <property type="match status" value="1"/>
</dbReference>
<dbReference type="Pfam" id="PF00101">
    <property type="entry name" value="RuBisCO_small"/>
    <property type="match status" value="1"/>
</dbReference>
<dbReference type="PRINTS" id="PR00152">
    <property type="entry name" value="RUBISCOSMALL"/>
</dbReference>
<dbReference type="SMART" id="SM00961">
    <property type="entry name" value="RuBisCO_small"/>
    <property type="match status" value="1"/>
</dbReference>
<dbReference type="SUPFAM" id="SSF55239">
    <property type="entry name" value="RuBisCO, small subunit"/>
    <property type="match status" value="1"/>
</dbReference>
<keyword id="KW-0025">Alternative splicing</keyword>
<keyword id="KW-0113">Calvin cycle</keyword>
<keyword id="KW-0120">Carbon dioxide fixation</keyword>
<keyword id="KW-0150">Chloroplast</keyword>
<keyword id="KW-0601">Photorespiration</keyword>
<keyword id="KW-0602">Photosynthesis</keyword>
<keyword id="KW-0934">Plastid</keyword>
<keyword id="KW-1185">Reference proteome</keyword>
<keyword id="KW-0809">Transit peptide</keyword>
<organism>
    <name type="scientific">Arabidopsis thaliana</name>
    <name type="common">Mouse-ear cress</name>
    <dbReference type="NCBI Taxonomy" id="3702"/>
    <lineage>
        <taxon>Eukaryota</taxon>
        <taxon>Viridiplantae</taxon>
        <taxon>Streptophyta</taxon>
        <taxon>Embryophyta</taxon>
        <taxon>Tracheophyta</taxon>
        <taxon>Spermatophyta</taxon>
        <taxon>Magnoliopsida</taxon>
        <taxon>eudicotyledons</taxon>
        <taxon>Gunneridae</taxon>
        <taxon>Pentapetalae</taxon>
        <taxon>rosids</taxon>
        <taxon>malvids</taxon>
        <taxon>Brassicales</taxon>
        <taxon>Brassicaceae</taxon>
        <taxon>Camelineae</taxon>
        <taxon>Arabidopsis</taxon>
    </lineage>
</organism>
<gene>
    <name type="primary">RBCS-3B</name>
    <name type="synonym">ATS3B</name>
    <name type="ordered locus">At5g38410</name>
    <name type="ORF">MXI10.13</name>
</gene>
<evidence type="ECO:0000255" key="1">
    <source>
        <dbReference type="HAMAP-Rule" id="MF_00860"/>
    </source>
</evidence>
<evidence type="ECO:0000305" key="2"/>
<name>RBS3B_ARATH</name>
<protein>
    <recommendedName>
        <fullName>Ribulose bisphosphate carboxylase small subunit 3B, chloroplastic</fullName>
        <shortName>RuBisCO small subunit 3B</shortName>
    </recommendedName>
</protein>
<reference key="1">
    <citation type="journal article" date="1988" name="Plant Mol. Biol.">
        <title>Four genes in two diverged subfamilies encode the ribulose-1,5-bisphosphate carboxylase small subunit polypeptides of Arabidopsis thaliana.</title>
        <authorList>
            <person name="Krebbers E."/>
            <person name="Seurinck J."/>
            <person name="Herdies L."/>
            <person name="Cashmore A.R."/>
            <person name="Timko M.P."/>
        </authorList>
        <dbReference type="AGRICOLA" id="IND91035191"/>
    </citation>
    <scope>NUCLEOTIDE SEQUENCE [GENOMIC DNA]</scope>
    <source>
        <strain>cv. Columbia K85</strain>
    </source>
</reference>
<reference key="2">
    <citation type="journal article" date="1997" name="DNA Res.">
        <title>Structural analysis of Arabidopsis thaliana chromosome 5. I. Sequence features of the 1.6 Mb regions covered by twenty physically assigned P1 clones.</title>
        <authorList>
            <person name="Sato S."/>
            <person name="Kotani H."/>
            <person name="Nakamura Y."/>
            <person name="Kaneko T."/>
            <person name="Asamizu E."/>
            <person name="Fukami M."/>
            <person name="Miyajima N."/>
            <person name="Tabata S."/>
        </authorList>
    </citation>
    <scope>NUCLEOTIDE SEQUENCE [LARGE SCALE GENOMIC DNA]</scope>
    <source>
        <strain>cv. Columbia</strain>
    </source>
</reference>
<reference key="3">
    <citation type="journal article" date="2017" name="Plant J.">
        <title>Araport11: a complete reannotation of the Arabidopsis thaliana reference genome.</title>
        <authorList>
            <person name="Cheng C.Y."/>
            <person name="Krishnakumar V."/>
            <person name="Chan A.P."/>
            <person name="Thibaud-Nissen F."/>
            <person name="Schobel S."/>
            <person name="Town C.D."/>
        </authorList>
    </citation>
    <scope>GENOME REANNOTATION</scope>
    <source>
        <strain>cv. Columbia</strain>
    </source>
</reference>
<reference key="4">
    <citation type="journal article" date="2003" name="Science">
        <title>Empirical analysis of transcriptional activity in the Arabidopsis genome.</title>
        <authorList>
            <person name="Yamada K."/>
            <person name="Lim J."/>
            <person name="Dale J.M."/>
            <person name="Chen H."/>
            <person name="Shinn P."/>
            <person name="Palm C.J."/>
            <person name="Southwick A.M."/>
            <person name="Wu H.C."/>
            <person name="Kim C.J."/>
            <person name="Nguyen M."/>
            <person name="Pham P.K."/>
            <person name="Cheuk R.F."/>
            <person name="Karlin-Newmann G."/>
            <person name="Liu S.X."/>
            <person name="Lam B."/>
            <person name="Sakano H."/>
            <person name="Wu T."/>
            <person name="Yu G."/>
            <person name="Miranda M."/>
            <person name="Quach H.L."/>
            <person name="Tripp M."/>
            <person name="Chang C.H."/>
            <person name="Lee J.M."/>
            <person name="Toriumi M.J."/>
            <person name="Chan M.M."/>
            <person name="Tang C.C."/>
            <person name="Onodera C.S."/>
            <person name="Deng J.M."/>
            <person name="Akiyama K."/>
            <person name="Ansari Y."/>
            <person name="Arakawa T."/>
            <person name="Banh J."/>
            <person name="Banno F."/>
            <person name="Bowser L."/>
            <person name="Brooks S.Y."/>
            <person name="Carninci P."/>
            <person name="Chao Q."/>
            <person name="Choy N."/>
            <person name="Enju A."/>
            <person name="Goldsmith A.D."/>
            <person name="Gurjal M."/>
            <person name="Hansen N.F."/>
            <person name="Hayashizaki Y."/>
            <person name="Johnson-Hopson C."/>
            <person name="Hsuan V.W."/>
            <person name="Iida K."/>
            <person name="Karnes M."/>
            <person name="Khan S."/>
            <person name="Koesema E."/>
            <person name="Ishida J."/>
            <person name="Jiang P.X."/>
            <person name="Jones T."/>
            <person name="Kawai J."/>
            <person name="Kamiya A."/>
            <person name="Meyers C."/>
            <person name="Nakajima M."/>
            <person name="Narusaka M."/>
            <person name="Seki M."/>
            <person name="Sakurai T."/>
            <person name="Satou M."/>
            <person name="Tamse R."/>
            <person name="Vaysberg M."/>
            <person name="Wallender E.K."/>
            <person name="Wong C."/>
            <person name="Yamamura Y."/>
            <person name="Yuan S."/>
            <person name="Shinozaki K."/>
            <person name="Davis R.W."/>
            <person name="Theologis A."/>
            <person name="Ecker J.R."/>
        </authorList>
    </citation>
    <scope>NUCLEOTIDE SEQUENCE [LARGE SCALE MRNA]</scope>
    <source>
        <strain>cv. Columbia</strain>
    </source>
</reference>
<comment type="function">
    <text evidence="1">RuBisCO catalyzes two reactions: the carboxylation of D-ribulose 1,5-bisphosphate, the primary event in carbon dioxide fixation, as well as the oxidative fragmentation of the pentose substrate. Both reactions occur simultaneously and in competition at the same active site. Although the small subunit is not catalytic it is essential for maximal activity.</text>
</comment>
<comment type="subunit">
    <text evidence="1">Heterohexadecamer of 8 large and 8 small subunits.</text>
</comment>
<comment type="interaction">
    <interactant intactId="EBI-639640">
        <id>P10798</id>
    </interactant>
    <interactant intactId="EBI-4426557">
        <id>Q84MB2</id>
        <label>TIFY8</label>
    </interactant>
    <organismsDiffer>false</organismsDiffer>
    <experiments>3</experiments>
</comment>
<comment type="subcellular location">
    <subcellularLocation>
        <location evidence="1">Plastid</location>
        <location evidence="1">Chloroplast</location>
    </subcellularLocation>
</comment>
<comment type="alternative products">
    <event type="alternative splicing"/>
    <isoform>
        <id>P10798-1</id>
        <name>1</name>
        <sequence type="displayed"/>
    </isoform>
    <text>A number of isoforms are produced. According to EST sequences.</text>
</comment>
<comment type="miscellaneous">
    <text>There are four genes coding for RBS in Arabidopsis thaliana.</text>
</comment>
<comment type="miscellaneous">
    <text evidence="1">The basic functional RuBisCO is composed of a large chain homodimer in a 'head-to-tail' conformation. In form I RuBisCO this homodimer is arranged in a barrel-like tetramer with the small subunits forming a tetrameric 'cap' on each end of the 'barrel'.</text>
</comment>
<comment type="similarity">
    <text evidence="1">Belongs to the RuBisCO small chain family.</text>
</comment>
<accession>P10798</accession>
<accession>Q9FF21</accession>
<feature type="transit peptide" description="Chloroplast" evidence="1">
    <location>
        <begin position="1"/>
        <end position="54"/>
    </location>
</feature>
<feature type="chain" id="PRO_0000031466" description="Ribulose bisphosphate carboxylase small subunit 3B, chloroplastic" evidence="1">
    <location>
        <begin position="55"/>
        <end position="181"/>
    </location>
</feature>
<feature type="sequence conflict" description="In Ref. 1; CAA32702." evidence="2" ref="1">
    <original>A</original>
    <variation>T</variation>
    <location>
        <position position="47"/>
    </location>
</feature>
<proteinExistence type="evidence at protein level"/>